<name>SEPF_EXIS2</name>
<reference key="1">
    <citation type="submission" date="2008-04" db="EMBL/GenBank/DDBJ databases">
        <title>Complete sequence of chromosome of Exiguobacterium sibiricum 255-15.</title>
        <authorList>
            <consortium name="US DOE Joint Genome Institute"/>
            <person name="Copeland A."/>
            <person name="Lucas S."/>
            <person name="Lapidus A."/>
            <person name="Glavina del Rio T."/>
            <person name="Dalin E."/>
            <person name="Tice H."/>
            <person name="Bruce D."/>
            <person name="Goodwin L."/>
            <person name="Pitluck S."/>
            <person name="Kiss H."/>
            <person name="Chertkov O."/>
            <person name="Monk C."/>
            <person name="Brettin T."/>
            <person name="Detter J.C."/>
            <person name="Han C."/>
            <person name="Kuske C.R."/>
            <person name="Schmutz J."/>
            <person name="Larimer F."/>
            <person name="Land M."/>
            <person name="Hauser L."/>
            <person name="Kyrpides N."/>
            <person name="Mikhailova N."/>
            <person name="Vishnivetskaya T."/>
            <person name="Rodrigues D.F."/>
            <person name="Gilichinsky D."/>
            <person name="Tiedje J."/>
            <person name="Richardson P."/>
        </authorList>
    </citation>
    <scope>NUCLEOTIDE SEQUENCE [LARGE SCALE GENOMIC DNA]</scope>
    <source>
        <strain>DSM 17290 / CCUG 55495 / CIP 109462 / JCM 13490 / 255-15</strain>
    </source>
</reference>
<comment type="function">
    <text evidence="1">Cell division protein that is part of the divisome complex and is recruited early to the Z-ring. Probably stimulates Z-ring formation, perhaps through the cross-linking of FtsZ protofilaments. Its function overlaps with FtsA.</text>
</comment>
<comment type="subunit">
    <text evidence="1">Homodimer. Interacts with FtsZ.</text>
</comment>
<comment type="subcellular location">
    <subcellularLocation>
        <location evidence="1">Cytoplasm</location>
    </subcellularLocation>
    <text evidence="1">Localizes to the division site, in a FtsZ-dependent manner.</text>
</comment>
<comment type="similarity">
    <text evidence="1">Belongs to the SepF family.</text>
</comment>
<accession>B1YIT1</accession>
<gene>
    <name evidence="1" type="primary">sepF</name>
    <name type="ordered locus">Exig_1955</name>
</gene>
<organism>
    <name type="scientific">Exiguobacterium sibiricum (strain DSM 17290 / CCUG 55495 / CIP 109462 / JCM 13490 / 255-15)</name>
    <dbReference type="NCBI Taxonomy" id="262543"/>
    <lineage>
        <taxon>Bacteria</taxon>
        <taxon>Bacillati</taxon>
        <taxon>Bacillota</taxon>
        <taxon>Bacilli</taxon>
        <taxon>Bacillales</taxon>
        <taxon>Bacillales Family XII. Incertae Sedis</taxon>
        <taxon>Exiguobacterium</taxon>
    </lineage>
</organism>
<sequence>MGFKTKMQNLFLGNTDDLDELEYENDATINKGRGASQQEYDEYYEDSTPTVTQKEDPVRQSNIVPIHTKKAKSQVILSEPRVFNEAQEIGEHLRQNRAVIVNMQRMSKDQSRQMINFLSGVVFALDGTITTISQNTLLCVPNNVELAGSISNLLGEDDINHKGW</sequence>
<protein>
    <recommendedName>
        <fullName evidence="1">Cell division protein SepF</fullName>
    </recommendedName>
</protein>
<dbReference type="EMBL" id="CP001022">
    <property type="protein sequence ID" value="ACB61407.1"/>
    <property type="molecule type" value="Genomic_DNA"/>
</dbReference>
<dbReference type="SMR" id="B1YIT1"/>
<dbReference type="STRING" id="262543.Exig_1955"/>
<dbReference type="KEGG" id="esi:Exig_1955"/>
<dbReference type="eggNOG" id="COG1799">
    <property type="taxonomic scope" value="Bacteria"/>
</dbReference>
<dbReference type="HOGENOM" id="CLU_078499_4_1_9"/>
<dbReference type="OrthoDB" id="9815206at2"/>
<dbReference type="Proteomes" id="UP000001681">
    <property type="component" value="Chromosome"/>
</dbReference>
<dbReference type="GO" id="GO:0005737">
    <property type="term" value="C:cytoplasm"/>
    <property type="evidence" value="ECO:0007669"/>
    <property type="project" value="UniProtKB-SubCell"/>
</dbReference>
<dbReference type="GO" id="GO:0000917">
    <property type="term" value="P:division septum assembly"/>
    <property type="evidence" value="ECO:0007669"/>
    <property type="project" value="UniProtKB-KW"/>
</dbReference>
<dbReference type="GO" id="GO:0043093">
    <property type="term" value="P:FtsZ-dependent cytokinesis"/>
    <property type="evidence" value="ECO:0007669"/>
    <property type="project" value="UniProtKB-UniRule"/>
</dbReference>
<dbReference type="Gene3D" id="3.30.110.150">
    <property type="entry name" value="SepF-like protein"/>
    <property type="match status" value="1"/>
</dbReference>
<dbReference type="HAMAP" id="MF_01197">
    <property type="entry name" value="SepF"/>
    <property type="match status" value="1"/>
</dbReference>
<dbReference type="InterPro" id="IPR023052">
    <property type="entry name" value="Cell_div_SepF"/>
</dbReference>
<dbReference type="InterPro" id="IPR007561">
    <property type="entry name" value="Cell_div_SepF/SepF-rel"/>
</dbReference>
<dbReference type="InterPro" id="IPR038594">
    <property type="entry name" value="SepF-like_sf"/>
</dbReference>
<dbReference type="PANTHER" id="PTHR35798">
    <property type="entry name" value="CELL DIVISION PROTEIN SEPF"/>
    <property type="match status" value="1"/>
</dbReference>
<dbReference type="PANTHER" id="PTHR35798:SF1">
    <property type="entry name" value="CELL DIVISION PROTEIN SEPF"/>
    <property type="match status" value="1"/>
</dbReference>
<dbReference type="Pfam" id="PF04472">
    <property type="entry name" value="SepF"/>
    <property type="match status" value="1"/>
</dbReference>
<keyword id="KW-0131">Cell cycle</keyword>
<keyword id="KW-0132">Cell division</keyword>
<keyword id="KW-0963">Cytoplasm</keyword>
<keyword id="KW-1185">Reference proteome</keyword>
<keyword id="KW-0717">Septation</keyword>
<feature type="chain" id="PRO_1000138467" description="Cell division protein SepF">
    <location>
        <begin position="1"/>
        <end position="164"/>
    </location>
</feature>
<feature type="region of interest" description="Disordered" evidence="2">
    <location>
        <begin position="29"/>
        <end position="57"/>
    </location>
</feature>
<proteinExistence type="inferred from homology"/>
<evidence type="ECO:0000255" key="1">
    <source>
        <dbReference type="HAMAP-Rule" id="MF_01197"/>
    </source>
</evidence>
<evidence type="ECO:0000256" key="2">
    <source>
        <dbReference type="SAM" id="MobiDB-lite"/>
    </source>
</evidence>